<keyword id="KW-0028">Amino-acid biosynthesis</keyword>
<keyword id="KW-0055">Arginine biosynthesis</keyword>
<keyword id="KW-0963">Cytoplasm</keyword>
<keyword id="KW-0238">DNA-binding</keyword>
<keyword id="KW-0678">Repressor</keyword>
<keyword id="KW-0804">Transcription</keyword>
<keyword id="KW-0805">Transcription regulation</keyword>
<reference key="1">
    <citation type="journal article" date="2008" name="Genome Res.">
        <title>Comparative genome analysis of Salmonella enteritidis PT4 and Salmonella gallinarum 287/91 provides insights into evolutionary and host adaptation pathways.</title>
        <authorList>
            <person name="Thomson N.R."/>
            <person name="Clayton D.J."/>
            <person name="Windhorst D."/>
            <person name="Vernikos G."/>
            <person name="Davidson S."/>
            <person name="Churcher C."/>
            <person name="Quail M.A."/>
            <person name="Stevens M."/>
            <person name="Jones M.A."/>
            <person name="Watson M."/>
            <person name="Barron A."/>
            <person name="Layton A."/>
            <person name="Pickard D."/>
            <person name="Kingsley R.A."/>
            <person name="Bignell A."/>
            <person name="Clark L."/>
            <person name="Harris B."/>
            <person name="Ormond D."/>
            <person name="Abdellah Z."/>
            <person name="Brooks K."/>
            <person name="Cherevach I."/>
            <person name="Chillingworth T."/>
            <person name="Woodward J."/>
            <person name="Norberczak H."/>
            <person name="Lord A."/>
            <person name="Arrowsmith C."/>
            <person name="Jagels K."/>
            <person name="Moule S."/>
            <person name="Mungall K."/>
            <person name="Saunders M."/>
            <person name="Whitehead S."/>
            <person name="Chabalgoity J.A."/>
            <person name="Maskell D."/>
            <person name="Humphreys T."/>
            <person name="Roberts M."/>
            <person name="Barrow P.A."/>
            <person name="Dougan G."/>
            <person name="Parkhill J."/>
        </authorList>
    </citation>
    <scope>NUCLEOTIDE SEQUENCE [LARGE SCALE GENOMIC DNA]</scope>
    <source>
        <strain>287/91 / NCTC 13346</strain>
    </source>
</reference>
<evidence type="ECO:0000255" key="1">
    <source>
        <dbReference type="HAMAP-Rule" id="MF_00173"/>
    </source>
</evidence>
<feature type="chain" id="PRO_1000097883" description="Arginine repressor">
    <location>
        <begin position="1"/>
        <end position="156"/>
    </location>
</feature>
<gene>
    <name evidence="1" type="primary">argR</name>
    <name type="ordered locus">SG3250</name>
</gene>
<name>ARGR_SALG2</name>
<dbReference type="EMBL" id="AM933173">
    <property type="protein sequence ID" value="CAR39048.1"/>
    <property type="molecule type" value="Genomic_DNA"/>
</dbReference>
<dbReference type="RefSeq" id="WP_001257852.1">
    <property type="nucleotide sequence ID" value="NC_011274.1"/>
</dbReference>
<dbReference type="SMR" id="B5REV8"/>
<dbReference type="KEGG" id="seg:SG3250"/>
<dbReference type="HOGENOM" id="CLU_097103_2_0_6"/>
<dbReference type="UniPathway" id="UPA00068"/>
<dbReference type="Proteomes" id="UP000008321">
    <property type="component" value="Chromosome"/>
</dbReference>
<dbReference type="GO" id="GO:0005737">
    <property type="term" value="C:cytoplasm"/>
    <property type="evidence" value="ECO:0007669"/>
    <property type="project" value="UniProtKB-SubCell"/>
</dbReference>
<dbReference type="GO" id="GO:0034618">
    <property type="term" value="F:arginine binding"/>
    <property type="evidence" value="ECO:0007669"/>
    <property type="project" value="InterPro"/>
</dbReference>
<dbReference type="GO" id="GO:0003677">
    <property type="term" value="F:DNA binding"/>
    <property type="evidence" value="ECO:0007669"/>
    <property type="project" value="UniProtKB-KW"/>
</dbReference>
<dbReference type="GO" id="GO:0003700">
    <property type="term" value="F:DNA-binding transcription factor activity"/>
    <property type="evidence" value="ECO:0007669"/>
    <property type="project" value="UniProtKB-UniRule"/>
</dbReference>
<dbReference type="GO" id="GO:0006526">
    <property type="term" value="P:L-arginine biosynthetic process"/>
    <property type="evidence" value="ECO:0007669"/>
    <property type="project" value="UniProtKB-UniPathway"/>
</dbReference>
<dbReference type="GO" id="GO:0051259">
    <property type="term" value="P:protein complex oligomerization"/>
    <property type="evidence" value="ECO:0007669"/>
    <property type="project" value="InterPro"/>
</dbReference>
<dbReference type="GO" id="GO:1900079">
    <property type="term" value="P:regulation of arginine biosynthetic process"/>
    <property type="evidence" value="ECO:0007669"/>
    <property type="project" value="UniProtKB-UniRule"/>
</dbReference>
<dbReference type="FunFam" id="1.10.10.10:FF:000074">
    <property type="entry name" value="Arginine repressor"/>
    <property type="match status" value="1"/>
</dbReference>
<dbReference type="FunFam" id="3.30.1360.40:FF:000004">
    <property type="entry name" value="Arginine repressor"/>
    <property type="match status" value="1"/>
</dbReference>
<dbReference type="Gene3D" id="3.30.1360.40">
    <property type="match status" value="1"/>
</dbReference>
<dbReference type="Gene3D" id="1.10.10.10">
    <property type="entry name" value="Winged helix-like DNA-binding domain superfamily/Winged helix DNA-binding domain"/>
    <property type="match status" value="1"/>
</dbReference>
<dbReference type="HAMAP" id="MF_00173">
    <property type="entry name" value="Arg_repressor"/>
    <property type="match status" value="1"/>
</dbReference>
<dbReference type="InterPro" id="IPR001669">
    <property type="entry name" value="Arg_repress"/>
</dbReference>
<dbReference type="InterPro" id="IPR020899">
    <property type="entry name" value="Arg_repress_C"/>
</dbReference>
<dbReference type="InterPro" id="IPR036251">
    <property type="entry name" value="Arg_repress_C_sf"/>
</dbReference>
<dbReference type="InterPro" id="IPR020900">
    <property type="entry name" value="Arg_repress_DNA-bd"/>
</dbReference>
<dbReference type="InterPro" id="IPR036388">
    <property type="entry name" value="WH-like_DNA-bd_sf"/>
</dbReference>
<dbReference type="InterPro" id="IPR036390">
    <property type="entry name" value="WH_DNA-bd_sf"/>
</dbReference>
<dbReference type="NCBIfam" id="TIGR01529">
    <property type="entry name" value="argR_whole"/>
    <property type="match status" value="1"/>
</dbReference>
<dbReference type="NCBIfam" id="NF003457">
    <property type="entry name" value="PRK05066.1"/>
    <property type="match status" value="1"/>
</dbReference>
<dbReference type="PANTHER" id="PTHR34471">
    <property type="entry name" value="ARGININE REPRESSOR"/>
    <property type="match status" value="1"/>
</dbReference>
<dbReference type="PANTHER" id="PTHR34471:SF1">
    <property type="entry name" value="ARGININE REPRESSOR"/>
    <property type="match status" value="1"/>
</dbReference>
<dbReference type="Pfam" id="PF01316">
    <property type="entry name" value="Arg_repressor"/>
    <property type="match status" value="1"/>
</dbReference>
<dbReference type="Pfam" id="PF02863">
    <property type="entry name" value="Arg_repressor_C"/>
    <property type="match status" value="1"/>
</dbReference>
<dbReference type="PRINTS" id="PR01467">
    <property type="entry name" value="ARGREPRESSOR"/>
</dbReference>
<dbReference type="SUPFAM" id="SSF55252">
    <property type="entry name" value="C-terminal domain of arginine repressor"/>
    <property type="match status" value="1"/>
</dbReference>
<dbReference type="SUPFAM" id="SSF46785">
    <property type="entry name" value="Winged helix' DNA-binding domain"/>
    <property type="match status" value="1"/>
</dbReference>
<comment type="function">
    <text evidence="1">Regulates arginine biosynthesis genes.</text>
</comment>
<comment type="pathway">
    <text>Amino-acid biosynthesis; L-arginine biosynthesis [regulation].</text>
</comment>
<comment type="subcellular location">
    <subcellularLocation>
        <location evidence="1">Cytoplasm</location>
    </subcellularLocation>
</comment>
<comment type="similarity">
    <text evidence="1">Belongs to the ArgR family.</text>
</comment>
<protein>
    <recommendedName>
        <fullName evidence="1">Arginine repressor</fullName>
    </recommendedName>
</protein>
<proteinExistence type="inferred from homology"/>
<organism>
    <name type="scientific">Salmonella gallinarum (strain 287/91 / NCTC 13346)</name>
    <dbReference type="NCBI Taxonomy" id="550538"/>
    <lineage>
        <taxon>Bacteria</taxon>
        <taxon>Pseudomonadati</taxon>
        <taxon>Pseudomonadota</taxon>
        <taxon>Gammaproteobacteria</taxon>
        <taxon>Enterobacterales</taxon>
        <taxon>Enterobacteriaceae</taxon>
        <taxon>Salmonella</taxon>
    </lineage>
</organism>
<accession>B5REV8</accession>
<sequence>MRSSAKQEELVRAFKALLKEEKFSSQGEIVLALQDQGFENINQSKVSRMLTKFGAVRTRNAKMEMVYCLPAELGVPTTSSPLKNLVLDIDYNDAVVVIHTSPGAAQLIARLLDSLGKAEGILGTIAGDDTIFTTPASGFSVRDLYEAILELFEQEL</sequence>